<comment type="function">
    <text evidence="5 8">Involved in defense of young plant parts against pests via the production of benzoxazolinones (hydroxamic acids) from hydroxamic acid glucosides. The preferred substrate is DIBOA-beta-D-glucoside. Can also use esculin and genistein glucoside as substrates, but no activity with salicin, p-nitrophenyl-alpha-glucoside or substrates related to cell wall components.</text>
</comment>
<comment type="catalytic activity">
    <reaction evidence="5 8">
        <text>DIMBOA beta-D-glucoside + H2O = DIMBOA + D-glucose</text>
        <dbReference type="Rhea" id="RHEA:33975"/>
        <dbReference type="ChEBI" id="CHEBI:4167"/>
        <dbReference type="ChEBI" id="CHEBI:15377"/>
        <dbReference type="ChEBI" id="CHEBI:18048"/>
        <dbReference type="ChEBI" id="CHEBI:37573"/>
        <dbReference type="EC" id="3.2.1.182"/>
    </reaction>
</comment>
<comment type="catalytic activity">
    <reaction evidence="5 8">
        <text>DIBOA beta-D-glucoside + H2O = DIBOA + D-glucose</text>
        <dbReference type="Rhea" id="RHEA:33979"/>
        <dbReference type="ChEBI" id="CHEBI:4167"/>
        <dbReference type="ChEBI" id="CHEBI:15377"/>
        <dbReference type="ChEBI" id="CHEBI:63558"/>
        <dbReference type="ChEBI" id="CHEBI:63670"/>
        <dbReference type="EC" id="3.2.1.182"/>
    </reaction>
</comment>
<comment type="catalytic activity">
    <reaction evidence="5 8">
        <text>Hydrolysis of terminal, non-reducing beta-D-glucosyl residues with release of beta-D-glucose.</text>
        <dbReference type="EC" id="3.2.1.21"/>
    </reaction>
</comment>
<comment type="activity regulation">
    <text evidence="5">Inhibited by castanospermine, Ag(+) and Cu(2+). 34% inhibition by Zn(2+) and not affected by EDTA.</text>
</comment>
<comment type="biophysicochemical properties">
    <kinetics>
        <KM evidence="5">1.19 mM for DIBOA-beta-D-glucoside</KM>
        <KM evidence="8">3.3 mM for DIBOA-beta-D-glucoside</KM>
        <KM evidence="6">0.8 mM for DIBOA-beta-D-glucoside (with recombinant enzyme)</KM>
        <KM evidence="5">0.617 mM for DIMBOA-beta-D-glucoside</KM>
        <KM evidence="8">2.1 mM for DIMBOA-beta-D-glucoside</KM>
        <KM evidence="6">1.3 mM for DIMBOA-beta-D-glucoside (with recombinant enzyme)</KM>
        <KM evidence="5">2 mM for HBOA-beta-D-glucoside</KM>
        <KM evidence="5">0.893 mM for HMBOA-beta-D-glucoside</KM>
        <KM evidence="8">1.4 mM for o-nitrophenyl beta-D-glucopyranoside</KM>
        <KM evidence="5">0.9 mM for p-nitrophenyl beta-D-glucopyranoside</KM>
        <KM evidence="8">2.4 mM for p-nitrophenyl beta-D-glucopyranoside</KM>
        <KM evidence="6">1.78 mM for p-nitrophenyl beta-D-glucopyranoside (with recombinant enzyme)</KM>
        <KM evidence="8">1.3 mM for p-nitrophenyl beta-D-galactopyranoside</KM>
        <KM evidence="5">3.17 mM for p-nitrophenyl beta-D-xyloside</KM>
        <KM evidence="5">0.616 mM for p-nitrophenyl beta-D-fucoside</KM>
        <KM evidence="8">0.8 mM for p-nitrophenyl beta-D-fucoside</KM>
        <KM evidence="5">0.151 mM for esculin</KM>
        <Vmax evidence="5">5870.0 nmol/sec/mg enzyme with DIBOA-beta-D-glucoside as substrate</Vmax>
        <Vmax evidence="8">2567.0 nmol/sec/mg enzyme with DIBOA-beta-D-glucoside as substrate</Vmax>
        <Vmax evidence="5">4952.0 nmol/sec/mg enzyme with DIMBOA-beta-D-glucoside as substrate</Vmax>
        <Vmax evidence="8">1786.0 nmol/sec/mg enzyme with DIMBOA-beta-D-glucoside as substrate</Vmax>
        <Vmax evidence="8">2375.0 nmol/sec/mg enzyme with o-nitrophenyl beta-D-glucopyranoside as substrate</Vmax>
        <Vmax evidence="5">1420.0 nmol/sec/mg enzyme with HBOA-beta-D-glucoside as substrate</Vmax>
        <Vmax evidence="5">1005.0 nmol/sec/mg enzyme with HMBOA-beta-D-glucoside as substrate</Vmax>
        <Vmax evidence="5">828.0 nmol/sec/mg enzyme with p-nitrophenyl beta-D-glucopyranoside as substrate</Vmax>
        <Vmax evidence="8">779.0 nmol/sec/mg enzyme with p-nitrophenyl beta-D-glucopyranoside as substrate</Vmax>
        <Vmax evidence="5">78.2 nmol/sec/mg enzyme with p-nitrophenyl beta-D-xyloside as substrate</Vmax>
        <Vmax evidence="5">1671.0 nmol/sec/mg enzyme with p-nitrophenyl beta-D-fucoside as substrate</Vmax>
        <Vmax evidence="8">997.0 nmol/sec/mg enzyme with p-nitrophenyl beta-D-fucoside as substrate</Vmax>
        <Vmax evidence="8">51.0 nmol/sec/mg enzyme with p-nitrophenyl beta-D-galactopyranoside as substrate</Vmax>
        <Vmax evidence="5">974.0 nmol/sec/mg enzyme with esculin as substrate</Vmax>
        <text>kcat is 172 sec(-1) with DIBOA-beta-D-glucoside as substrate. kcat is 118 sec(-1) with DIBOA-beta-D-glucoside as substrate (with recombinant enzyme). kcat is 119 sec(-1) with DIMBOA-beta-D-glucoside as substrate. kcat is 158 sec(-1) with DIMBOA-beta-D-glucoside as substrate (with recombinant enzyme). kcat is 159 sec(-1) with o-nitrophenyl beta-D-glucopyranoside as substrate. kcat is 66 sec(-1) with p-nitrophenyl beta-D-fucoside as substrate. kcat is 52 sec(-1) with p-nitrophenyl beta-D-glucopyranoside as substrate. kcat is 3.5 sec(-1) with p-nitrophenyl beta-D-galactopyranoside as substrate. kcat is 22.2 sec(-1) with p-nitrophenyl beta-D-glucopyranoside as substrate (with recombinant enzyme).</text>
    </kinetics>
    <phDependence>
        <text evidence="5 6 8">Optimum pH is 5.5.</text>
    </phDependence>
    <temperatureDependence>
        <text evidence="5 6 8">Optimum temperature is 25-30 degrees Celsius.</text>
    </temperatureDependence>
</comment>
<comment type="subunit">
    <text evidence="6 7">Homohexamer.</text>
</comment>
<comment type="subcellular location">
    <subcellularLocation>
        <location evidence="9">Plastid</location>
        <location evidence="9">Chloroplast</location>
    </subcellularLocation>
</comment>
<comment type="tissue specificity">
    <text evidence="8">Expressed in seedlings, mesocotyl, coleoptile, leaf sheath, and roots.</text>
</comment>
<comment type="similarity">
    <text evidence="9">Belongs to the glycosyl hydrolase 1 family.</text>
</comment>
<keyword id="KW-0002">3D-structure</keyword>
<keyword id="KW-0150">Chloroplast</keyword>
<keyword id="KW-0903">Direct protein sequencing</keyword>
<keyword id="KW-1015">Disulfide bond</keyword>
<keyword id="KW-0326">Glycosidase</keyword>
<keyword id="KW-0378">Hydrolase</keyword>
<keyword id="KW-0934">Plastid</keyword>
<keyword id="KW-0809">Transit peptide</keyword>
<organism>
    <name type="scientific">Secale cereale</name>
    <name type="common">Rye</name>
    <dbReference type="NCBI Taxonomy" id="4550"/>
    <lineage>
        <taxon>Eukaryota</taxon>
        <taxon>Viridiplantae</taxon>
        <taxon>Streptophyta</taxon>
        <taxon>Embryophyta</taxon>
        <taxon>Tracheophyta</taxon>
        <taxon>Spermatophyta</taxon>
        <taxon>Magnoliopsida</taxon>
        <taxon>Liliopsida</taxon>
        <taxon>Poales</taxon>
        <taxon>Poaceae</taxon>
        <taxon>BOP clade</taxon>
        <taxon>Pooideae</taxon>
        <taxon>Triticodae</taxon>
        <taxon>Triticeae</taxon>
        <taxon>Hordeinae</taxon>
        <taxon>Secale</taxon>
    </lineage>
</organism>
<reference key="1">
    <citation type="journal article" date="2003" name="Physiol. Plantarum">
        <title>Cloning of a plastidic rye (Secale cereale) beta-glucosidase cDNA and its expression in Escherichia coli.</title>
        <authorList>
            <person name="Nikus J."/>
            <person name="Esen A."/>
            <person name="Jonsson L.M.V."/>
        </authorList>
    </citation>
    <scope>NUCLEOTIDE SEQUENCE [MRNA]</scope>
    <scope>FUNCTION</scope>
    <scope>CATALYTIC ACTIVITY</scope>
    <scope>BIOPHYSICOCHEMICAL PROPERTIES</scope>
    <scope>TISSUE SPECIFICITY</scope>
    <source>
        <strain>cv. Motto</strain>
        <tissue>Coleoptile</tissue>
    </source>
</reference>
<reference key="2">
    <citation type="journal article" date="2000" name="Plant Sci.">
        <title>Purification and characterization of a beta-glucosidase from rye (Secale cereale L.) seedlings.</title>
        <authorList>
            <person name="Sue M."/>
            <person name="Ishihara A."/>
            <person name="Iwamura H."/>
        </authorList>
    </citation>
    <scope>PROTEIN SEQUENCE OF 51-70</scope>
    <scope>FUNCTION</scope>
    <scope>CATALYTIC ACTIVITY</scope>
    <scope>BIOPHYSICOCHEMICAL PROPERTIES</scope>
    <scope>ACTIVITY REGULATION</scope>
    <scope>SUBCELLULAR LOCATION</scope>
    <source>
        <strain>cv. Haru-ichiban</strain>
    </source>
</reference>
<reference key="3">
    <citation type="journal article" date="2006" name="Plant Physiol.">
        <title>Molecular and structural characterization of hexameric beta-D-glucosidases in wheat and rye.</title>
        <authorList>
            <person name="Sue M."/>
            <person name="Yamazaki K."/>
            <person name="Yajima S."/>
            <person name="Nomura T."/>
            <person name="Matsukawa T."/>
            <person name="Iwamura H."/>
            <person name="Miyamoto T."/>
        </authorList>
    </citation>
    <scope>SUBUNIT</scope>
    <scope>BIOPHYSICOCHEMICAL PROPERTIES</scope>
    <scope>MUTAGENESIS OF GLU-240; PHE-247; TYR-427; GLU-456; GLY-513; SER-514 AND PHE-520</scope>
</reference>
<reference key="4">
    <citation type="journal article" date="2011" name="Plant Sci.">
        <title>Active-site architecture of benzoxazinone-glucoside beta-D-glucosidases in Triticeae.</title>
        <authorList>
            <person name="Sue M."/>
            <person name="Nakamura C."/>
            <person name="Miyamoto T."/>
            <person name="Yajima S."/>
        </authorList>
    </citation>
    <scope>X-RAY CRYSTALLOGRAPHY (2.20 ANGSTROMS) OF 50-568 IN COMPLEX WITH DIMBOA OR INHIBITOR</scope>
</reference>
<feature type="transit peptide" description="Chloroplast" evidence="5">
    <location>
        <begin position="1"/>
        <end position="50"/>
    </location>
</feature>
<feature type="chain" id="PRO_0000424096" description="4-hydroxy-7-methoxy-3-oxo-3,4-dihydro-2H-1,4-benzoxazin-2-yl glucoside beta-D-glucosidase, chloroplastic">
    <location>
        <begin position="51"/>
        <end position="568"/>
    </location>
</feature>
<feature type="active site" description="Proton donor" evidence="2">
    <location>
        <position position="240"/>
    </location>
</feature>
<feature type="active site" description="Nucleophile" evidence="4 7 13">
    <location>
        <position position="456"/>
    </location>
</feature>
<feature type="binding site" evidence="10 13">
    <location>
        <position position="92"/>
    </location>
    <ligand>
        <name>a beta-D-glucoside</name>
        <dbReference type="ChEBI" id="CHEBI:22798"/>
    </ligand>
</feature>
<feature type="binding site" evidence="10 13">
    <location>
        <position position="194"/>
    </location>
    <ligand>
        <name>a beta-D-glucoside</name>
        <dbReference type="ChEBI" id="CHEBI:22798"/>
    </ligand>
</feature>
<feature type="binding site" evidence="10 13">
    <location>
        <begin position="239"/>
        <end position="240"/>
    </location>
    <ligand>
        <name>a beta-D-glucoside</name>
        <dbReference type="ChEBI" id="CHEBI:22798"/>
    </ligand>
</feature>
<feature type="binding site" evidence="2">
    <location>
        <position position="383"/>
    </location>
    <ligand>
        <name>a beta-D-glucoside</name>
        <dbReference type="ChEBI" id="CHEBI:22798"/>
    </ligand>
</feature>
<feature type="binding site" evidence="3">
    <location>
        <position position="456"/>
    </location>
    <ligand>
        <name>a beta-D-glucoside</name>
        <dbReference type="ChEBI" id="CHEBI:22798"/>
    </ligand>
</feature>
<feature type="binding site" evidence="2">
    <location>
        <position position="504"/>
    </location>
    <ligand>
        <name>a beta-D-glucoside</name>
        <dbReference type="ChEBI" id="CHEBI:22798"/>
    </ligand>
</feature>
<feature type="binding site" evidence="10 13">
    <location>
        <begin position="511"/>
        <end position="512"/>
    </location>
    <ligand>
        <name>a beta-D-glucoside</name>
        <dbReference type="ChEBI" id="CHEBI:22798"/>
    </ligand>
</feature>
<feature type="binding site" evidence="1">
    <location>
        <position position="520"/>
    </location>
    <ligand>
        <name>a beta-D-glucoside</name>
        <dbReference type="ChEBI" id="CHEBI:22798"/>
    </ligand>
</feature>
<feature type="disulfide bond" evidence="7 11 12 13">
    <location>
        <begin position="259"/>
        <end position="265"/>
    </location>
</feature>
<feature type="mutagenesis site" description="Total loss of activity." evidence="6">
    <original>E</original>
    <variation>A</variation>
    <location>
        <position position="240"/>
    </location>
</feature>
<feature type="mutagenesis site" description="96% loss of activity with DIBOA-Glc and DIMBOA-Glc." evidence="6">
    <original>F</original>
    <variation>A</variation>
    <location>
        <position position="247"/>
    </location>
</feature>
<feature type="mutagenesis site" description="7% loss of activity with DIBOA-Glc and 4.8 fold increased activity with DIMBOA-Glc." evidence="6">
    <original>Y</original>
    <variation>A</variation>
    <location>
        <position position="427"/>
    </location>
</feature>
<feature type="mutagenesis site" description="87% loss of activity with DIBOA-Glc and 1.5 fold increased activity with DIMBOA-Glc." evidence="6">
    <original>Y</original>
    <variation>F</variation>
    <location>
        <position position="427"/>
    </location>
</feature>
<feature type="mutagenesis site" description="Total loss of activity." evidence="6">
    <original>E</original>
    <variation>A</variation>
    <location>
        <position position="456"/>
    </location>
</feature>
<feature type="mutagenesis site" description="77% loss of activity with DIBOA-Glc and 81% with DIMBOA-Glc." evidence="6">
    <original>G</original>
    <variation>F</variation>
    <location>
        <position position="513"/>
    </location>
</feature>
<feature type="mutagenesis site" description="42% loss of activity with DIBOA-Glc and 2 fold increased activity with DIMBOA-Glc. 42% loss of activity with DIBOA-Glc and 4 fold increased activity with DIMBOA-Glc; when associated with L-514." evidence="6">
    <original>G</original>
    <variation>S</variation>
    <location>
        <position position="513"/>
    </location>
</feature>
<feature type="mutagenesis site" description="62% loss of activity with DIBOA-Glc and 2.4 fold increased activity with DIMBOA-Glc. 42% loss of activity with DIBOA-Glc and 4 fold increased activity with DIMBOA-Glc; when associated with S-513." evidence="6">
    <original>S</original>
    <variation>L</variation>
    <location>
        <position position="514"/>
    </location>
</feature>
<feature type="mutagenesis site" description="19% loss of activity with DIBOA-Glc and 2.5 fold increased activity with DIMBOA-Glc." evidence="6">
    <original>F</original>
    <variation>Y</variation>
    <location>
        <position position="520"/>
    </location>
</feature>
<feature type="helix" evidence="14">
    <location>
        <begin position="69"/>
        <end position="71"/>
    </location>
</feature>
<feature type="helix" evidence="14">
    <location>
        <begin position="75"/>
        <end position="77"/>
    </location>
</feature>
<feature type="strand" evidence="14">
    <location>
        <begin position="83"/>
        <end position="87"/>
    </location>
</feature>
<feature type="helix" evidence="14">
    <location>
        <begin position="90"/>
        <end position="93"/>
    </location>
</feature>
<feature type="helix" evidence="14">
    <location>
        <begin position="106"/>
        <end position="113"/>
    </location>
</feature>
<feature type="helix" evidence="14">
    <location>
        <begin position="115"/>
        <end position="117"/>
    </location>
</feature>
<feature type="strand" evidence="14">
    <location>
        <begin position="124"/>
        <end position="126"/>
    </location>
</feature>
<feature type="helix" evidence="14">
    <location>
        <begin position="130"/>
        <end position="144"/>
    </location>
</feature>
<feature type="strand" evidence="14">
    <location>
        <begin position="147"/>
        <end position="152"/>
    </location>
</feature>
<feature type="helix" evidence="14">
    <location>
        <begin position="155"/>
        <end position="158"/>
    </location>
</feature>
<feature type="strand" evidence="14">
    <location>
        <begin position="162"/>
        <end position="165"/>
    </location>
</feature>
<feature type="helix" evidence="14">
    <location>
        <begin position="168"/>
        <end position="183"/>
    </location>
</feature>
<feature type="strand" evidence="14">
    <location>
        <begin position="187"/>
        <end position="195"/>
    </location>
</feature>
<feature type="helix" evidence="14">
    <location>
        <begin position="199"/>
        <end position="205"/>
    </location>
</feature>
<feature type="helix" evidence="14">
    <location>
        <begin position="207"/>
        <end position="209"/>
    </location>
</feature>
<feature type="helix" evidence="14">
    <location>
        <begin position="212"/>
        <end position="228"/>
    </location>
</feature>
<feature type="turn" evidence="14">
    <location>
        <begin position="229"/>
        <end position="231"/>
    </location>
</feature>
<feature type="strand" evidence="14">
    <location>
        <begin position="234"/>
        <end position="239"/>
    </location>
</feature>
<feature type="helix" evidence="14">
    <location>
        <begin position="241"/>
        <end position="249"/>
    </location>
</feature>
<feature type="strand" evidence="14">
    <location>
        <begin position="265"/>
        <end position="267"/>
    </location>
</feature>
<feature type="turn" evidence="14">
    <location>
        <begin position="272"/>
        <end position="274"/>
    </location>
</feature>
<feature type="helix" evidence="14">
    <location>
        <begin position="275"/>
        <end position="297"/>
    </location>
</feature>
<feature type="strand" evidence="14">
    <location>
        <begin position="305"/>
        <end position="321"/>
    </location>
</feature>
<feature type="helix" evidence="14">
    <location>
        <begin position="322"/>
        <end position="335"/>
    </location>
</feature>
<feature type="helix" evidence="14">
    <location>
        <begin position="337"/>
        <end position="345"/>
    </location>
</feature>
<feature type="helix" evidence="14">
    <location>
        <begin position="350"/>
        <end position="356"/>
    </location>
</feature>
<feature type="helix" evidence="14">
    <location>
        <begin position="357"/>
        <end position="359"/>
    </location>
</feature>
<feature type="helix" evidence="14">
    <location>
        <begin position="365"/>
        <end position="371"/>
    </location>
</feature>
<feature type="strand" evidence="14">
    <location>
        <begin position="376"/>
        <end position="390"/>
    </location>
</feature>
<feature type="helix" evidence="14">
    <location>
        <begin position="402"/>
        <end position="406"/>
    </location>
</feature>
<feature type="strand" evidence="14">
    <location>
        <begin position="408"/>
        <end position="413"/>
    </location>
</feature>
<feature type="strand" evidence="14">
    <location>
        <begin position="419"/>
        <end position="421"/>
    </location>
</feature>
<feature type="helix" evidence="14">
    <location>
        <begin position="433"/>
        <end position="445"/>
    </location>
</feature>
<feature type="strand" evidence="14">
    <location>
        <begin position="452"/>
        <end position="456"/>
    </location>
</feature>
<feature type="helix" evidence="14">
    <location>
        <begin position="475"/>
        <end position="493"/>
    </location>
</feature>
<feature type="strand" evidence="14">
    <location>
        <begin position="498"/>
        <end position="504"/>
    </location>
</feature>
<feature type="helix" evidence="14">
    <location>
        <begin position="512"/>
        <end position="517"/>
    </location>
</feature>
<feature type="strand" evidence="14">
    <location>
        <begin position="522"/>
        <end position="525"/>
    </location>
</feature>
<feature type="helix" evidence="14">
    <location>
        <begin position="527"/>
        <end position="529"/>
    </location>
</feature>
<feature type="strand" evidence="14">
    <location>
        <begin position="533"/>
        <end position="535"/>
    </location>
</feature>
<feature type="helix" evidence="14">
    <location>
        <begin position="537"/>
        <end position="545"/>
    </location>
</feature>
<protein>
    <recommendedName>
        <fullName>4-hydroxy-7-methoxy-3-oxo-3,4-dihydro-2H-1,4-benzoxazin-2-yl glucoside beta-D-glucosidase, chloroplastic</fullName>
        <ecNumber evidence="5 8">3.2.1.182</ecNumber>
    </recommendedName>
    <alternativeName>
        <fullName>Beta-glucosidase</fullName>
        <shortName>ScGlu</shortName>
        <ecNumber evidence="5 8">3.2.1.21</ecNumber>
    </alternativeName>
</protein>
<evidence type="ECO:0000250" key="1">
    <source>
        <dbReference type="UniProtKB" id="Q1XH05"/>
    </source>
</evidence>
<evidence type="ECO:0000250" key="2">
    <source>
        <dbReference type="UniProtKB" id="Q8L7J2"/>
    </source>
</evidence>
<evidence type="ECO:0000250" key="3">
    <source>
        <dbReference type="UniProtKB" id="Q9SPP9"/>
    </source>
</evidence>
<evidence type="ECO:0000255" key="4">
    <source>
        <dbReference type="PROSITE-ProRule" id="PRU10055"/>
    </source>
</evidence>
<evidence type="ECO:0000269" key="5">
    <source>
    </source>
</evidence>
<evidence type="ECO:0000269" key="6">
    <source>
    </source>
</evidence>
<evidence type="ECO:0000269" key="7">
    <source>
    </source>
</evidence>
<evidence type="ECO:0000269" key="8">
    <source ref="1"/>
</evidence>
<evidence type="ECO:0000305" key="9"/>
<evidence type="ECO:0000305" key="10">
    <source>
    </source>
</evidence>
<evidence type="ECO:0007744" key="11">
    <source>
        <dbReference type="PDB" id="3AIU"/>
    </source>
</evidence>
<evidence type="ECO:0007744" key="12">
    <source>
        <dbReference type="PDB" id="3AIV"/>
    </source>
</evidence>
<evidence type="ECO:0007744" key="13">
    <source>
        <dbReference type="PDB" id="3AIW"/>
    </source>
</evidence>
<evidence type="ECO:0007829" key="14">
    <source>
        <dbReference type="PDB" id="3AIU"/>
    </source>
</evidence>
<name>HGGL_SECCE</name>
<accession>Q9FYS3</accession>
<dbReference type="EC" id="3.2.1.182" evidence="5 8"/>
<dbReference type="EC" id="3.2.1.21" evidence="5 8"/>
<dbReference type="EMBL" id="AF293849">
    <property type="protein sequence ID" value="AAG00614.1"/>
    <property type="molecule type" value="mRNA"/>
</dbReference>
<dbReference type="PDB" id="3AIU">
    <property type="method" value="X-ray"/>
    <property type="resolution" value="2.20 A"/>
    <property type="chains" value="A=50-568"/>
</dbReference>
<dbReference type="PDB" id="3AIV">
    <property type="method" value="X-ray"/>
    <property type="resolution" value="2.50 A"/>
    <property type="chains" value="A=50-568"/>
</dbReference>
<dbReference type="PDB" id="3AIW">
    <property type="method" value="X-ray"/>
    <property type="resolution" value="2.40 A"/>
    <property type="chains" value="A=50-568"/>
</dbReference>
<dbReference type="PDBsum" id="3AIU"/>
<dbReference type="PDBsum" id="3AIV"/>
<dbReference type="PDBsum" id="3AIW"/>
<dbReference type="SMR" id="Q9FYS3"/>
<dbReference type="CAZy" id="GH1">
    <property type="family name" value="Glycoside Hydrolase Family 1"/>
</dbReference>
<dbReference type="BRENDA" id="3.2.1.182">
    <property type="organism ID" value="5654"/>
</dbReference>
<dbReference type="BRENDA" id="3.2.1.21">
    <property type="organism ID" value="5654"/>
</dbReference>
<dbReference type="SABIO-RK" id="Q9FYS3"/>
<dbReference type="EvolutionaryTrace" id="Q9FYS3"/>
<dbReference type="GO" id="GO:0009507">
    <property type="term" value="C:chloroplast"/>
    <property type="evidence" value="ECO:0007669"/>
    <property type="project" value="UniProtKB-SubCell"/>
</dbReference>
<dbReference type="GO" id="GO:0008422">
    <property type="term" value="F:beta-glucosidase activity"/>
    <property type="evidence" value="ECO:0007669"/>
    <property type="project" value="UniProtKB-EC"/>
</dbReference>
<dbReference type="GO" id="GO:0102726">
    <property type="term" value="F:DIMBOA glucoside beta-D-glucosidase activity"/>
    <property type="evidence" value="ECO:0007669"/>
    <property type="project" value="UniProtKB-EC"/>
</dbReference>
<dbReference type="GO" id="GO:0005975">
    <property type="term" value="P:carbohydrate metabolic process"/>
    <property type="evidence" value="ECO:0007669"/>
    <property type="project" value="InterPro"/>
</dbReference>
<dbReference type="FunFam" id="3.20.20.80:FF:000041">
    <property type="entry name" value="Beta-glucosidase 7"/>
    <property type="match status" value="1"/>
</dbReference>
<dbReference type="Gene3D" id="3.20.20.80">
    <property type="entry name" value="Glycosidases"/>
    <property type="match status" value="1"/>
</dbReference>
<dbReference type="InterPro" id="IPR001360">
    <property type="entry name" value="Glyco_hydro_1"/>
</dbReference>
<dbReference type="InterPro" id="IPR018120">
    <property type="entry name" value="Glyco_hydro_1_AS"/>
</dbReference>
<dbReference type="InterPro" id="IPR033132">
    <property type="entry name" value="Glyco_hydro_1_N_CS"/>
</dbReference>
<dbReference type="InterPro" id="IPR017853">
    <property type="entry name" value="Glycoside_hydrolase_SF"/>
</dbReference>
<dbReference type="PANTHER" id="PTHR10353:SF326">
    <property type="entry name" value="4-HYDROXY-7-METHOXY-3-OXO-3,4-DIHYDRO-2H-1,4-BENZOXAZIN-2-YL GLUCOSIDE BETA-D-GLUCOSIDASE 1, CHLOROPLASTIC"/>
    <property type="match status" value="1"/>
</dbReference>
<dbReference type="PANTHER" id="PTHR10353">
    <property type="entry name" value="GLYCOSYL HYDROLASE"/>
    <property type="match status" value="1"/>
</dbReference>
<dbReference type="Pfam" id="PF00232">
    <property type="entry name" value="Glyco_hydro_1"/>
    <property type="match status" value="1"/>
</dbReference>
<dbReference type="PRINTS" id="PR00131">
    <property type="entry name" value="GLHYDRLASE1"/>
</dbReference>
<dbReference type="SUPFAM" id="SSF51445">
    <property type="entry name" value="(Trans)glycosidases"/>
    <property type="match status" value="1"/>
</dbReference>
<dbReference type="PROSITE" id="PS00572">
    <property type="entry name" value="GLYCOSYL_HYDROL_F1_1"/>
    <property type="match status" value="1"/>
</dbReference>
<dbReference type="PROSITE" id="PS00653">
    <property type="entry name" value="GLYCOSYL_HYDROL_F1_2"/>
    <property type="match status" value="1"/>
</dbReference>
<sequence>MALLVGGTLNPTTHLSLRSRAGRNSENVWLRSAASSQTSKGRFCNLTVRAGTPSKPSEPIGPVFTKLKPWQIPKRDWFSKDFLFGASTSAYQIEGAWNEDGKGPSTWDHFCHTYPERISDGTNGDVAANSYHMYEEDVKALKDMGMKVYRFSISWSRILPNGTGKPNQKGIDYYNNLINSLIRHGIVPYVTIWHWDTPQALEDKYGGFLDKQIVNDYKYFAELCFQSFGDRVKNWFTFNEPHTYCCFSYGEGIHAPGRCSPGLDCAVPEGDSLREPYTAGHHILLAHAEAVELFKAHYNKHGDSKIGMAFDVMGYEPYQDSFLDDQARERSIDYNMGWFLEPVVRGDYPFSMRSLIGDRLPMFTKEEQEKLGSLCDIMGLNYYTSRFSKHVDISSDYTPTLNTDDAYASSETTGSDGNEIGPITGTYWIYMYPKGLTDLLLIMKEKYGNPPIFITENGIADVEGDPEMPDPLDDWKRLDYLQRHISAVKDAIDQGADVRGHFTWGLIDNFEWGSGYSSRFGLVYIDKEDGNKRKLKKSAKWFAKFNSVPKTLLKTTNNNATVTASVSV</sequence>
<proteinExistence type="evidence at protein level"/>